<reference key="1">
    <citation type="submission" date="2009-03" db="EMBL/GenBank/DDBJ databases">
        <title>Complete genome sequence of Edwardsiella ictaluri 93-146.</title>
        <authorList>
            <person name="Williams M.L."/>
            <person name="Gillaspy A.F."/>
            <person name="Dyer D.W."/>
            <person name="Thune R.L."/>
            <person name="Waldbieser G.C."/>
            <person name="Schuster S.C."/>
            <person name="Gipson J."/>
            <person name="Zaitshik J."/>
            <person name="Landry C."/>
            <person name="Lawrence M.L."/>
        </authorList>
    </citation>
    <scope>NUCLEOTIDE SEQUENCE [LARGE SCALE GENOMIC DNA]</scope>
    <source>
        <strain>93-146</strain>
    </source>
</reference>
<gene>
    <name evidence="1" type="primary">cyoE</name>
    <name type="ordered locus">NT01EI_2223</name>
</gene>
<dbReference type="EC" id="2.5.1.141" evidence="1"/>
<dbReference type="EMBL" id="CP001600">
    <property type="protein sequence ID" value="ACR69397.1"/>
    <property type="molecule type" value="Genomic_DNA"/>
</dbReference>
<dbReference type="RefSeq" id="WP_015871522.1">
    <property type="nucleotide sequence ID" value="NZ_CP169062.1"/>
</dbReference>
<dbReference type="SMR" id="C5BFX0"/>
<dbReference type="STRING" id="67780.B6E78_03595"/>
<dbReference type="GeneID" id="69539139"/>
<dbReference type="KEGG" id="eic:NT01EI_2223"/>
<dbReference type="PATRIC" id="fig|634503.3.peg.1974"/>
<dbReference type="HOGENOM" id="CLU_029631_0_0_6"/>
<dbReference type="OrthoDB" id="9814417at2"/>
<dbReference type="UniPathway" id="UPA00834">
    <property type="reaction ID" value="UER00712"/>
</dbReference>
<dbReference type="Proteomes" id="UP000001485">
    <property type="component" value="Chromosome"/>
</dbReference>
<dbReference type="GO" id="GO:0005886">
    <property type="term" value="C:plasma membrane"/>
    <property type="evidence" value="ECO:0007669"/>
    <property type="project" value="UniProtKB-SubCell"/>
</dbReference>
<dbReference type="GO" id="GO:0008495">
    <property type="term" value="F:protoheme IX farnesyltransferase activity"/>
    <property type="evidence" value="ECO:0007669"/>
    <property type="project" value="UniProtKB-UniRule"/>
</dbReference>
<dbReference type="GO" id="GO:0048034">
    <property type="term" value="P:heme O biosynthetic process"/>
    <property type="evidence" value="ECO:0007669"/>
    <property type="project" value="UniProtKB-UniRule"/>
</dbReference>
<dbReference type="CDD" id="cd13957">
    <property type="entry name" value="PT_UbiA_Cox10"/>
    <property type="match status" value="1"/>
</dbReference>
<dbReference type="FunFam" id="1.10.357.140:FF:000001">
    <property type="entry name" value="Protoheme IX farnesyltransferase"/>
    <property type="match status" value="1"/>
</dbReference>
<dbReference type="Gene3D" id="1.10.357.140">
    <property type="entry name" value="UbiA prenyltransferase"/>
    <property type="match status" value="1"/>
</dbReference>
<dbReference type="HAMAP" id="MF_00154">
    <property type="entry name" value="CyoE_CtaB"/>
    <property type="match status" value="1"/>
</dbReference>
<dbReference type="InterPro" id="IPR006369">
    <property type="entry name" value="Protohaem_IX_farnesylTrfase"/>
</dbReference>
<dbReference type="InterPro" id="IPR000537">
    <property type="entry name" value="UbiA_prenyltransferase"/>
</dbReference>
<dbReference type="InterPro" id="IPR030470">
    <property type="entry name" value="UbiA_prenylTrfase_CS"/>
</dbReference>
<dbReference type="InterPro" id="IPR044878">
    <property type="entry name" value="UbiA_sf"/>
</dbReference>
<dbReference type="NCBIfam" id="TIGR01473">
    <property type="entry name" value="cyoE_ctaB"/>
    <property type="match status" value="1"/>
</dbReference>
<dbReference type="NCBIfam" id="NF003348">
    <property type="entry name" value="PRK04375.1-1"/>
    <property type="match status" value="1"/>
</dbReference>
<dbReference type="PANTHER" id="PTHR43448">
    <property type="entry name" value="PROTOHEME IX FARNESYLTRANSFERASE, MITOCHONDRIAL"/>
    <property type="match status" value="1"/>
</dbReference>
<dbReference type="PANTHER" id="PTHR43448:SF2">
    <property type="entry name" value="PROTOHEME IX FARNESYLTRANSFERASE, MITOCHONDRIAL"/>
    <property type="match status" value="1"/>
</dbReference>
<dbReference type="Pfam" id="PF01040">
    <property type="entry name" value="UbiA"/>
    <property type="match status" value="1"/>
</dbReference>
<dbReference type="PROSITE" id="PS00943">
    <property type="entry name" value="UBIA"/>
    <property type="match status" value="1"/>
</dbReference>
<name>CYOE_EDWI9</name>
<organism>
    <name type="scientific">Edwardsiella ictaluri (strain 93-146)</name>
    <dbReference type="NCBI Taxonomy" id="634503"/>
    <lineage>
        <taxon>Bacteria</taxon>
        <taxon>Pseudomonadati</taxon>
        <taxon>Pseudomonadota</taxon>
        <taxon>Gammaproteobacteria</taxon>
        <taxon>Enterobacterales</taxon>
        <taxon>Hafniaceae</taxon>
        <taxon>Edwardsiella</taxon>
    </lineage>
</organism>
<accession>C5BFX0</accession>
<protein>
    <recommendedName>
        <fullName evidence="1">Protoheme IX farnesyltransferase</fullName>
        <ecNumber evidence="1">2.5.1.141</ecNumber>
    </recommendedName>
    <alternativeName>
        <fullName evidence="1">Heme B farnesyltransferase</fullName>
    </alternativeName>
    <alternativeName>
        <fullName evidence="1">Heme O synthase</fullName>
    </alternativeName>
</protein>
<keyword id="KW-0997">Cell inner membrane</keyword>
<keyword id="KW-1003">Cell membrane</keyword>
<keyword id="KW-0350">Heme biosynthesis</keyword>
<keyword id="KW-0472">Membrane</keyword>
<keyword id="KW-0808">Transferase</keyword>
<keyword id="KW-0812">Transmembrane</keyword>
<keyword id="KW-1133">Transmembrane helix</keyword>
<comment type="function">
    <text evidence="1">Converts heme B (protoheme IX) to heme O by substitution of the vinyl group on carbon 2 of heme B porphyrin ring with a hydroxyethyl farnesyl side group.</text>
</comment>
<comment type="catalytic activity">
    <reaction evidence="1">
        <text>heme b + (2E,6E)-farnesyl diphosphate + H2O = Fe(II)-heme o + diphosphate</text>
        <dbReference type="Rhea" id="RHEA:28070"/>
        <dbReference type="ChEBI" id="CHEBI:15377"/>
        <dbReference type="ChEBI" id="CHEBI:33019"/>
        <dbReference type="ChEBI" id="CHEBI:60344"/>
        <dbReference type="ChEBI" id="CHEBI:60530"/>
        <dbReference type="ChEBI" id="CHEBI:175763"/>
        <dbReference type="EC" id="2.5.1.141"/>
    </reaction>
</comment>
<comment type="pathway">
    <text evidence="1">Porphyrin-containing compound metabolism; heme O biosynthesis; heme O from protoheme: step 1/1.</text>
</comment>
<comment type="subcellular location">
    <subcellularLocation>
        <location evidence="1">Cell inner membrane</location>
        <topology evidence="1">Multi-pass membrane protein</topology>
    </subcellularLocation>
</comment>
<comment type="miscellaneous">
    <text evidence="1">Carbon 2 of the heme B porphyrin ring is defined according to the Fischer nomenclature.</text>
</comment>
<comment type="similarity">
    <text evidence="1">Belongs to the UbiA prenyltransferase family. Protoheme IX farnesyltransferase subfamily.</text>
</comment>
<feature type="chain" id="PRO_1000203452" description="Protoheme IX farnesyltransferase">
    <location>
        <begin position="1"/>
        <end position="296"/>
    </location>
</feature>
<feature type="transmembrane region" description="Helical" evidence="1">
    <location>
        <begin position="13"/>
        <end position="33"/>
    </location>
</feature>
<feature type="transmembrane region" description="Helical" evidence="1">
    <location>
        <begin position="35"/>
        <end position="55"/>
    </location>
</feature>
<feature type="transmembrane region" description="Helical" evidence="1">
    <location>
        <begin position="84"/>
        <end position="104"/>
    </location>
</feature>
<feature type="transmembrane region" description="Helical" evidence="1">
    <location>
        <begin position="107"/>
        <end position="127"/>
    </location>
</feature>
<feature type="transmembrane region" description="Helical" evidence="1">
    <location>
        <begin position="132"/>
        <end position="152"/>
    </location>
</feature>
<feature type="transmembrane region" description="Helical" evidence="1">
    <location>
        <begin position="162"/>
        <end position="182"/>
    </location>
</feature>
<feature type="transmembrane region" description="Helical" evidence="1">
    <location>
        <begin position="208"/>
        <end position="228"/>
    </location>
</feature>
<feature type="transmembrane region" description="Helical" evidence="1">
    <location>
        <begin position="229"/>
        <end position="249"/>
    </location>
</feature>
<feature type="transmembrane region" description="Helical" evidence="1">
    <location>
        <begin position="264"/>
        <end position="284"/>
    </location>
</feature>
<evidence type="ECO:0000255" key="1">
    <source>
        <dbReference type="HAMAP-Rule" id="MF_00154"/>
    </source>
</evidence>
<sequence length="296" mass="32125">MIKQYLLVTKPGIIFGNLISVVGGFLLAAKGIIDYPLFLATLVGVSLVVASGCVFNNYIDRDIDKKMERTKNRVLVKGLIAPSVTLIYATVLGIAGFVLLYIAANPLAMWLAVMGFVVYVGVYSLYMKRHSVYGTLIGSLSGAAPPVIGYCAVTNAFDAGALILLAIFSLWQMPHSYAIAIFRFKDYQAAGIPVLPVVKGVSVAKNHITLYILAFMIATLMLALVGYAGYKYLIVAAVVSIWWLGMALRGYKTENDSIWARKLFVFSIVAITSLSVMMSIDFSVSSASPALLTYVW</sequence>
<proteinExistence type="inferred from homology"/>